<proteinExistence type="inferred from homology"/>
<evidence type="ECO:0000255" key="1">
    <source>
        <dbReference type="HAMAP-Rule" id="MF_00199"/>
    </source>
</evidence>
<name>APAH_YERPG</name>
<comment type="function">
    <text evidence="1">Hydrolyzes diadenosine 5',5'''-P1,P4-tetraphosphate to yield ADP.</text>
</comment>
<comment type="catalytic activity">
    <reaction evidence="1">
        <text>P(1),P(4)-bis(5'-adenosyl) tetraphosphate + H2O = 2 ADP + 2 H(+)</text>
        <dbReference type="Rhea" id="RHEA:24252"/>
        <dbReference type="ChEBI" id="CHEBI:15377"/>
        <dbReference type="ChEBI" id="CHEBI:15378"/>
        <dbReference type="ChEBI" id="CHEBI:58141"/>
        <dbReference type="ChEBI" id="CHEBI:456216"/>
        <dbReference type="EC" id="3.6.1.41"/>
    </reaction>
</comment>
<comment type="similarity">
    <text evidence="1">Belongs to the Ap4A hydrolase family.</text>
</comment>
<reference key="1">
    <citation type="journal article" date="2010" name="J. Bacteriol.">
        <title>Genome sequence of the deep-rooted Yersinia pestis strain Angola reveals new insights into the evolution and pangenome of the plague bacterium.</title>
        <authorList>
            <person name="Eppinger M."/>
            <person name="Worsham P.L."/>
            <person name="Nikolich M.P."/>
            <person name="Riley D.R."/>
            <person name="Sebastian Y."/>
            <person name="Mou S."/>
            <person name="Achtman M."/>
            <person name="Lindler L.E."/>
            <person name="Ravel J."/>
        </authorList>
    </citation>
    <scope>NUCLEOTIDE SEQUENCE [LARGE SCALE GENOMIC DNA]</scope>
    <source>
        <strain>Angola</strain>
    </source>
</reference>
<sequence>MSTYLIGDIHGCLDELLALLAQVNFDPQQDTLWLTGDLVARGPASLDVLRYVRSLGPAVRMVLGNHDLHLLAVYAGISRNKPKDRITPLLDAPDADELINWLRRQPVLQVDDQLKLIMAHAGITPQWDIETAKMCAREVEAVLSSDSYPLFLDAMYGDMPNNWSPELTGLARLRFSTNALTRMRFCFPNGQLDMICKDTPENAPAPLKPWFDLPRLVDPEYSIIFGHWASLEGKGVPEGIYGLDTGCCWGGDLTLLRWDDKRYFTQRAFKAEAEINNNNGFAAGEAVQH</sequence>
<feature type="chain" id="PRO_1000099343" description="Bis(5'-nucleosyl)-tetraphosphatase, symmetrical">
    <location>
        <begin position="1"/>
        <end position="289"/>
    </location>
</feature>
<organism>
    <name type="scientific">Yersinia pestis bv. Antiqua (strain Angola)</name>
    <dbReference type="NCBI Taxonomy" id="349746"/>
    <lineage>
        <taxon>Bacteria</taxon>
        <taxon>Pseudomonadati</taxon>
        <taxon>Pseudomonadota</taxon>
        <taxon>Gammaproteobacteria</taxon>
        <taxon>Enterobacterales</taxon>
        <taxon>Yersiniaceae</taxon>
        <taxon>Yersinia</taxon>
    </lineage>
</organism>
<gene>
    <name evidence="1" type="primary">apaH</name>
    <name type="ordered locus">YpAngola_A0774</name>
</gene>
<accession>A9QZZ2</accession>
<keyword id="KW-0378">Hydrolase</keyword>
<dbReference type="EC" id="3.6.1.41" evidence="1"/>
<dbReference type="EMBL" id="CP000901">
    <property type="protein sequence ID" value="ABX86859.1"/>
    <property type="molecule type" value="Genomic_DNA"/>
</dbReference>
<dbReference type="RefSeq" id="WP_002210492.1">
    <property type="nucleotide sequence ID" value="NZ_CP009935.1"/>
</dbReference>
<dbReference type="SMR" id="A9QZZ2"/>
<dbReference type="GeneID" id="57974120"/>
<dbReference type="KEGG" id="ypg:YpAngola_A0774"/>
<dbReference type="PATRIC" id="fig|349746.12.peg.1721"/>
<dbReference type="GO" id="GO:0008803">
    <property type="term" value="F:bis(5'-nucleosyl)-tetraphosphatase (symmetrical) activity"/>
    <property type="evidence" value="ECO:0007669"/>
    <property type="project" value="UniProtKB-UniRule"/>
</dbReference>
<dbReference type="CDD" id="cd07422">
    <property type="entry name" value="MPP_ApaH"/>
    <property type="match status" value="1"/>
</dbReference>
<dbReference type="FunFam" id="3.60.21.10:FF:000013">
    <property type="entry name" value="Bis(5'-nucleosyl)-tetraphosphatase, symmetrical"/>
    <property type="match status" value="1"/>
</dbReference>
<dbReference type="Gene3D" id="3.60.21.10">
    <property type="match status" value="1"/>
</dbReference>
<dbReference type="HAMAP" id="MF_00199">
    <property type="entry name" value="ApaH"/>
    <property type="match status" value="1"/>
</dbReference>
<dbReference type="InterPro" id="IPR004617">
    <property type="entry name" value="ApaH"/>
</dbReference>
<dbReference type="InterPro" id="IPR004843">
    <property type="entry name" value="Calcineurin-like_PHP_ApaH"/>
</dbReference>
<dbReference type="InterPro" id="IPR029052">
    <property type="entry name" value="Metallo-depent_PP-like"/>
</dbReference>
<dbReference type="NCBIfam" id="TIGR00668">
    <property type="entry name" value="apaH"/>
    <property type="match status" value="1"/>
</dbReference>
<dbReference type="NCBIfam" id="NF001204">
    <property type="entry name" value="PRK00166.1"/>
    <property type="match status" value="1"/>
</dbReference>
<dbReference type="PANTHER" id="PTHR40942">
    <property type="match status" value="1"/>
</dbReference>
<dbReference type="PANTHER" id="PTHR40942:SF4">
    <property type="entry name" value="CYTOCHROME C5"/>
    <property type="match status" value="1"/>
</dbReference>
<dbReference type="Pfam" id="PF00149">
    <property type="entry name" value="Metallophos"/>
    <property type="match status" value="1"/>
</dbReference>
<dbReference type="PIRSF" id="PIRSF000903">
    <property type="entry name" value="B5n-ttraPtase_sm"/>
    <property type="match status" value="1"/>
</dbReference>
<dbReference type="SUPFAM" id="SSF56300">
    <property type="entry name" value="Metallo-dependent phosphatases"/>
    <property type="match status" value="1"/>
</dbReference>
<protein>
    <recommendedName>
        <fullName evidence="1">Bis(5'-nucleosyl)-tetraphosphatase, symmetrical</fullName>
        <ecNumber evidence="1">3.6.1.41</ecNumber>
    </recommendedName>
    <alternativeName>
        <fullName evidence="1">Ap4A hydrolase</fullName>
    </alternativeName>
    <alternativeName>
        <fullName evidence="1">Diadenosine 5',5'''-P1,P4-tetraphosphate pyrophosphohydrolase</fullName>
    </alternativeName>
    <alternativeName>
        <fullName evidence="1">Diadenosine tetraphosphatase</fullName>
    </alternativeName>
</protein>